<sequence length="712" mass="78181">MSQEKQVFSIDLAGRQLTVETGQLAKQANGAVLVRYGDTAVLSTATASKEAKNVDFFPLTVNYEERLYAVGKIPGGFIKREGRPSEKAILASRLIDRPIRPLFADGFRNEVQVVSIVMSVDQDCSSEMAAMLGSSLALSISDIPFEGPIAGATVGRINGEFVINPTVEQQEQSDIHLVVAGTKDAINMVEAGADQVPEETMLEAIMFGHDEIKRLIAFQEEIVQAVGKEKSEVKLYEVDADLNQAVREMAEKDMHSAIQVHEKHAREDAINEVKKRVIEHYEAQEADADTLGQVNEILYKIVKEEVRRLITVEKIRPDGRKGDEIRPLASEVGILSRTHGSGLFTRGQTQALSICTLGALGDVQILDGLGVEESKRFMHHYNFPSFSVGETRPMRGPGRREIGHGALGERALEPVIPSEKDFPYTVRLVSEVLESNGSTSQASICGSTLAMMDAGVPLKAPVAGIAMGLVKTGEHYTILSDIQGMEDHLGDMDFKVAGTAHGVTALQMDIKIDGLSREILEEALQQAKVGRVHILNHMLSVIAEPRTELSAYAPKIITMTINPDKIRDVIGPSGKQINKIIEETGVKIDIEQDGTVFISSINQEMNDKAKKIIEDIVREVQVGEIYEGKVKRVEKFGAFVELFSGKDGLVHISELALERVGKVEDVVKIGDVITVKVIEIDKQGRVNLSRKVLLKEEQEKEAAKEENKQEQQ</sequence>
<accession>C3L7C0</accession>
<keyword id="KW-0963">Cytoplasm</keyword>
<keyword id="KW-0460">Magnesium</keyword>
<keyword id="KW-0479">Metal-binding</keyword>
<keyword id="KW-0548">Nucleotidyltransferase</keyword>
<keyword id="KW-0694">RNA-binding</keyword>
<keyword id="KW-0808">Transferase</keyword>
<gene>
    <name evidence="1" type="primary">pnp</name>
    <name type="ordered locus">BAMEG_0687</name>
</gene>
<proteinExistence type="inferred from homology"/>
<name>PNP_BACAC</name>
<comment type="function">
    <text evidence="1">Involved in mRNA degradation. Catalyzes the phosphorolysis of single-stranded polyribonucleotides processively in the 3'- to 5'-direction.</text>
</comment>
<comment type="catalytic activity">
    <reaction evidence="1">
        <text>RNA(n+1) + phosphate = RNA(n) + a ribonucleoside 5'-diphosphate</text>
        <dbReference type="Rhea" id="RHEA:22096"/>
        <dbReference type="Rhea" id="RHEA-COMP:14527"/>
        <dbReference type="Rhea" id="RHEA-COMP:17342"/>
        <dbReference type="ChEBI" id="CHEBI:43474"/>
        <dbReference type="ChEBI" id="CHEBI:57930"/>
        <dbReference type="ChEBI" id="CHEBI:140395"/>
        <dbReference type="EC" id="2.7.7.8"/>
    </reaction>
</comment>
<comment type="cofactor">
    <cofactor evidence="1">
        <name>Mg(2+)</name>
        <dbReference type="ChEBI" id="CHEBI:18420"/>
    </cofactor>
</comment>
<comment type="subcellular location">
    <subcellularLocation>
        <location evidence="1">Cytoplasm</location>
    </subcellularLocation>
</comment>
<comment type="similarity">
    <text evidence="1">Belongs to the polyribonucleotide nucleotidyltransferase family.</text>
</comment>
<organism>
    <name type="scientific">Bacillus anthracis (strain CDC 684 / NRRL 3495)</name>
    <dbReference type="NCBI Taxonomy" id="568206"/>
    <lineage>
        <taxon>Bacteria</taxon>
        <taxon>Bacillati</taxon>
        <taxon>Bacillota</taxon>
        <taxon>Bacilli</taxon>
        <taxon>Bacillales</taxon>
        <taxon>Bacillaceae</taxon>
        <taxon>Bacillus</taxon>
        <taxon>Bacillus cereus group</taxon>
    </lineage>
</organism>
<dbReference type="EC" id="2.7.7.8" evidence="1"/>
<dbReference type="EMBL" id="CP001215">
    <property type="protein sequence ID" value="ACP15983.1"/>
    <property type="molecule type" value="Genomic_DNA"/>
</dbReference>
<dbReference type="RefSeq" id="WP_000076750.1">
    <property type="nucleotide sequence ID" value="NC_012581.1"/>
</dbReference>
<dbReference type="SMR" id="C3L7C0"/>
<dbReference type="GeneID" id="93007305"/>
<dbReference type="KEGG" id="bah:BAMEG_0687"/>
<dbReference type="HOGENOM" id="CLU_004217_2_2_9"/>
<dbReference type="GO" id="GO:0005829">
    <property type="term" value="C:cytosol"/>
    <property type="evidence" value="ECO:0007669"/>
    <property type="project" value="TreeGrafter"/>
</dbReference>
<dbReference type="GO" id="GO:0000175">
    <property type="term" value="F:3'-5'-RNA exonuclease activity"/>
    <property type="evidence" value="ECO:0007669"/>
    <property type="project" value="TreeGrafter"/>
</dbReference>
<dbReference type="GO" id="GO:0000287">
    <property type="term" value="F:magnesium ion binding"/>
    <property type="evidence" value="ECO:0007669"/>
    <property type="project" value="UniProtKB-UniRule"/>
</dbReference>
<dbReference type="GO" id="GO:0004654">
    <property type="term" value="F:polyribonucleotide nucleotidyltransferase activity"/>
    <property type="evidence" value="ECO:0007669"/>
    <property type="project" value="UniProtKB-UniRule"/>
</dbReference>
<dbReference type="GO" id="GO:0003723">
    <property type="term" value="F:RNA binding"/>
    <property type="evidence" value="ECO:0007669"/>
    <property type="project" value="UniProtKB-UniRule"/>
</dbReference>
<dbReference type="GO" id="GO:0006402">
    <property type="term" value="P:mRNA catabolic process"/>
    <property type="evidence" value="ECO:0007669"/>
    <property type="project" value="UniProtKB-UniRule"/>
</dbReference>
<dbReference type="GO" id="GO:0006396">
    <property type="term" value="P:RNA processing"/>
    <property type="evidence" value="ECO:0007669"/>
    <property type="project" value="InterPro"/>
</dbReference>
<dbReference type="CDD" id="cd02393">
    <property type="entry name" value="KH-I_PNPase"/>
    <property type="match status" value="1"/>
</dbReference>
<dbReference type="CDD" id="cd11363">
    <property type="entry name" value="RNase_PH_PNPase_1"/>
    <property type="match status" value="1"/>
</dbReference>
<dbReference type="CDD" id="cd11364">
    <property type="entry name" value="RNase_PH_PNPase_2"/>
    <property type="match status" value="1"/>
</dbReference>
<dbReference type="CDD" id="cd04472">
    <property type="entry name" value="S1_PNPase"/>
    <property type="match status" value="1"/>
</dbReference>
<dbReference type="FunFam" id="2.40.50.140:FF:000023">
    <property type="entry name" value="Polyribonucleotide nucleotidyltransferase"/>
    <property type="match status" value="1"/>
</dbReference>
<dbReference type="FunFam" id="3.30.1370.10:FF:000001">
    <property type="entry name" value="Polyribonucleotide nucleotidyltransferase"/>
    <property type="match status" value="1"/>
</dbReference>
<dbReference type="FunFam" id="3.30.230.70:FF:000001">
    <property type="entry name" value="Polyribonucleotide nucleotidyltransferase"/>
    <property type="match status" value="1"/>
</dbReference>
<dbReference type="FunFam" id="3.30.230.70:FF:000002">
    <property type="entry name" value="Polyribonucleotide nucleotidyltransferase"/>
    <property type="match status" value="1"/>
</dbReference>
<dbReference type="Gene3D" id="3.30.230.70">
    <property type="entry name" value="GHMP Kinase, N-terminal domain"/>
    <property type="match status" value="2"/>
</dbReference>
<dbReference type="Gene3D" id="3.30.1370.10">
    <property type="entry name" value="K Homology domain, type 1"/>
    <property type="match status" value="1"/>
</dbReference>
<dbReference type="Gene3D" id="2.40.50.140">
    <property type="entry name" value="Nucleic acid-binding proteins"/>
    <property type="match status" value="1"/>
</dbReference>
<dbReference type="HAMAP" id="MF_01595">
    <property type="entry name" value="PNPase"/>
    <property type="match status" value="1"/>
</dbReference>
<dbReference type="InterPro" id="IPR001247">
    <property type="entry name" value="ExoRNase_PH_dom1"/>
</dbReference>
<dbReference type="InterPro" id="IPR015847">
    <property type="entry name" value="ExoRNase_PH_dom2"/>
</dbReference>
<dbReference type="InterPro" id="IPR036345">
    <property type="entry name" value="ExoRNase_PH_dom2_sf"/>
</dbReference>
<dbReference type="InterPro" id="IPR004087">
    <property type="entry name" value="KH_dom"/>
</dbReference>
<dbReference type="InterPro" id="IPR004088">
    <property type="entry name" value="KH_dom_type_1"/>
</dbReference>
<dbReference type="InterPro" id="IPR036612">
    <property type="entry name" value="KH_dom_type_1_sf"/>
</dbReference>
<dbReference type="InterPro" id="IPR012340">
    <property type="entry name" value="NA-bd_OB-fold"/>
</dbReference>
<dbReference type="InterPro" id="IPR012162">
    <property type="entry name" value="PNPase"/>
</dbReference>
<dbReference type="InterPro" id="IPR027408">
    <property type="entry name" value="PNPase/RNase_PH_dom_sf"/>
</dbReference>
<dbReference type="InterPro" id="IPR015848">
    <property type="entry name" value="PNPase_PH_RNA-bd_bac/org-type"/>
</dbReference>
<dbReference type="InterPro" id="IPR020568">
    <property type="entry name" value="Ribosomal_Su5_D2-typ_SF"/>
</dbReference>
<dbReference type="InterPro" id="IPR003029">
    <property type="entry name" value="S1_domain"/>
</dbReference>
<dbReference type="NCBIfam" id="TIGR03591">
    <property type="entry name" value="polynuc_phos"/>
    <property type="match status" value="1"/>
</dbReference>
<dbReference type="NCBIfam" id="NF008805">
    <property type="entry name" value="PRK11824.1"/>
    <property type="match status" value="1"/>
</dbReference>
<dbReference type="PANTHER" id="PTHR11252">
    <property type="entry name" value="POLYRIBONUCLEOTIDE NUCLEOTIDYLTRANSFERASE"/>
    <property type="match status" value="1"/>
</dbReference>
<dbReference type="PANTHER" id="PTHR11252:SF0">
    <property type="entry name" value="POLYRIBONUCLEOTIDE NUCLEOTIDYLTRANSFERASE 1, MITOCHONDRIAL"/>
    <property type="match status" value="1"/>
</dbReference>
<dbReference type="Pfam" id="PF00013">
    <property type="entry name" value="KH_1"/>
    <property type="match status" value="1"/>
</dbReference>
<dbReference type="Pfam" id="PF03726">
    <property type="entry name" value="PNPase"/>
    <property type="match status" value="1"/>
</dbReference>
<dbReference type="Pfam" id="PF01138">
    <property type="entry name" value="RNase_PH"/>
    <property type="match status" value="2"/>
</dbReference>
<dbReference type="Pfam" id="PF03725">
    <property type="entry name" value="RNase_PH_C"/>
    <property type="match status" value="2"/>
</dbReference>
<dbReference type="Pfam" id="PF00575">
    <property type="entry name" value="S1"/>
    <property type="match status" value="1"/>
</dbReference>
<dbReference type="PIRSF" id="PIRSF005499">
    <property type="entry name" value="PNPase"/>
    <property type="match status" value="1"/>
</dbReference>
<dbReference type="SMART" id="SM00322">
    <property type="entry name" value="KH"/>
    <property type="match status" value="1"/>
</dbReference>
<dbReference type="SMART" id="SM00316">
    <property type="entry name" value="S1"/>
    <property type="match status" value="1"/>
</dbReference>
<dbReference type="SUPFAM" id="SSF54791">
    <property type="entry name" value="Eukaryotic type KH-domain (KH-domain type I)"/>
    <property type="match status" value="1"/>
</dbReference>
<dbReference type="SUPFAM" id="SSF50249">
    <property type="entry name" value="Nucleic acid-binding proteins"/>
    <property type="match status" value="1"/>
</dbReference>
<dbReference type="SUPFAM" id="SSF55666">
    <property type="entry name" value="Ribonuclease PH domain 2-like"/>
    <property type="match status" value="2"/>
</dbReference>
<dbReference type="SUPFAM" id="SSF54211">
    <property type="entry name" value="Ribosomal protein S5 domain 2-like"/>
    <property type="match status" value="2"/>
</dbReference>
<dbReference type="PROSITE" id="PS50084">
    <property type="entry name" value="KH_TYPE_1"/>
    <property type="match status" value="1"/>
</dbReference>
<dbReference type="PROSITE" id="PS50126">
    <property type="entry name" value="S1"/>
    <property type="match status" value="1"/>
</dbReference>
<protein>
    <recommendedName>
        <fullName evidence="1">Polyribonucleotide nucleotidyltransferase</fullName>
        <ecNumber evidence="1">2.7.7.8</ecNumber>
    </recommendedName>
    <alternativeName>
        <fullName evidence="1">Polynucleotide phosphorylase</fullName>
        <shortName evidence="1">PNPase</shortName>
    </alternativeName>
</protein>
<reference key="1">
    <citation type="submission" date="2008-10" db="EMBL/GenBank/DDBJ databases">
        <title>Genome sequence of Bacillus anthracis str. CDC 684.</title>
        <authorList>
            <person name="Dodson R.J."/>
            <person name="Munk A.C."/>
            <person name="Brettin T."/>
            <person name="Bruce D."/>
            <person name="Detter C."/>
            <person name="Tapia R."/>
            <person name="Han C."/>
            <person name="Sutton G."/>
            <person name="Sims D."/>
        </authorList>
    </citation>
    <scope>NUCLEOTIDE SEQUENCE [LARGE SCALE GENOMIC DNA]</scope>
    <source>
        <strain>CDC 684 / NRRL 3495</strain>
    </source>
</reference>
<feature type="chain" id="PRO_1000185720" description="Polyribonucleotide nucleotidyltransferase">
    <location>
        <begin position="1"/>
        <end position="712"/>
    </location>
</feature>
<feature type="domain" description="KH" evidence="1">
    <location>
        <begin position="554"/>
        <end position="613"/>
    </location>
</feature>
<feature type="domain" description="S1 motif" evidence="1">
    <location>
        <begin position="623"/>
        <end position="691"/>
    </location>
</feature>
<feature type="binding site" evidence="1">
    <location>
        <position position="487"/>
    </location>
    <ligand>
        <name>Mg(2+)</name>
        <dbReference type="ChEBI" id="CHEBI:18420"/>
    </ligand>
</feature>
<feature type="binding site" evidence="1">
    <location>
        <position position="493"/>
    </location>
    <ligand>
        <name>Mg(2+)</name>
        <dbReference type="ChEBI" id="CHEBI:18420"/>
    </ligand>
</feature>
<evidence type="ECO:0000255" key="1">
    <source>
        <dbReference type="HAMAP-Rule" id="MF_01595"/>
    </source>
</evidence>